<sequence>MRCVPVFIILLLLIPSAPSVDAQRKTKDDVPLASFHDNAKRTLKRLWNKRSCCPQEFLCCLYLVK</sequence>
<evidence type="ECO:0000255" key="1"/>
<evidence type="ECO:0000303" key="2">
    <source>
    </source>
</evidence>
<evidence type="ECO:0000305" key="3"/>
<evidence type="ECO:0000305" key="4">
    <source>
    </source>
</evidence>
<accession>Q6PN81</accession>
<comment type="subcellular location">
    <subcellularLocation>
        <location evidence="4">Secreted</location>
    </subcellularLocation>
</comment>
<comment type="tissue specificity">
    <text evidence="4">Expressed by the venom duct.</text>
</comment>
<comment type="domain">
    <text evidence="3">The cysteine framework is V (CC-CC).</text>
</comment>
<comment type="PTM">
    <text evidence="3">Contains 2 disulfide bonds that can be either 'C1-C3, C2-C4' or 'C1-C4, C2-C3', since these disulfide connectivities have been observed for conotoxins with cysteine framework V (for examples, see AC P0DQQ7 and AC P81755).</text>
</comment>
<comment type="similarity">
    <text evidence="3">Belongs to the conotoxin T superfamily.</text>
</comment>
<name>CT51_CONLE</name>
<organism>
    <name type="scientific">Conus leopardus</name>
    <name type="common">Leopard cone</name>
    <dbReference type="NCBI Taxonomy" id="101306"/>
    <lineage>
        <taxon>Eukaryota</taxon>
        <taxon>Metazoa</taxon>
        <taxon>Spiralia</taxon>
        <taxon>Lophotrochozoa</taxon>
        <taxon>Mollusca</taxon>
        <taxon>Gastropoda</taxon>
        <taxon>Caenogastropoda</taxon>
        <taxon>Neogastropoda</taxon>
        <taxon>Conoidea</taxon>
        <taxon>Conidae</taxon>
        <taxon>Conus</taxon>
        <taxon>Lithoconus</taxon>
    </lineage>
</organism>
<dbReference type="EMBL" id="AY591769">
    <property type="protein sequence ID" value="AAT01633.1"/>
    <property type="molecule type" value="mRNA"/>
</dbReference>
<dbReference type="ConoServer" id="860">
    <property type="toxin name" value="Lp5.1 precursor"/>
</dbReference>
<dbReference type="GO" id="GO:0005576">
    <property type="term" value="C:extracellular region"/>
    <property type="evidence" value="ECO:0007669"/>
    <property type="project" value="UniProtKB-SubCell"/>
</dbReference>
<dbReference type="GO" id="GO:0090729">
    <property type="term" value="F:toxin activity"/>
    <property type="evidence" value="ECO:0007669"/>
    <property type="project" value="UniProtKB-KW"/>
</dbReference>
<dbReference type="InterPro" id="IPR031565">
    <property type="entry name" value="T-conotoxin"/>
</dbReference>
<dbReference type="Pfam" id="PF16981">
    <property type="entry name" value="Chi-conotoxin"/>
    <property type="match status" value="1"/>
</dbReference>
<reference key="1">
    <citation type="journal article" date="2006" name="Acta Biochim. Biophys. Sin.">
        <title>cDNA cloning of two novel T-superfamily conotoxins from Conus leopardus.</title>
        <authorList>
            <person name="Chen W.-H."/>
            <person name="Han Y.-H."/>
            <person name="Wang Q."/>
            <person name="Miao X.-W."/>
            <person name="Ou L."/>
            <person name="Shao X.-X."/>
        </authorList>
    </citation>
    <scope>NUCLEOTIDE SEQUENCE [MRNA]</scope>
    <source>
        <tissue>Venom duct</tissue>
    </source>
</reference>
<feature type="signal peptide" evidence="1">
    <location>
        <begin position="1"/>
        <end position="22"/>
    </location>
</feature>
<feature type="propeptide" id="PRO_0000234819" evidence="4">
    <location>
        <begin position="23"/>
        <end position="50"/>
    </location>
</feature>
<feature type="peptide" id="PRO_0000234820" description="Conotoxin Lp5.1" evidence="4">
    <location>
        <begin position="51"/>
        <end position="65"/>
    </location>
</feature>
<keyword id="KW-0165">Cleavage on pair of basic residues</keyword>
<keyword id="KW-1015">Disulfide bond</keyword>
<keyword id="KW-0964">Secreted</keyword>
<keyword id="KW-0732">Signal</keyword>
<keyword id="KW-0800">Toxin</keyword>
<proteinExistence type="inferred from homology"/>
<protein>
    <recommendedName>
        <fullName evidence="2">Conotoxin Lp5.1</fullName>
    </recommendedName>
    <alternativeName>
        <fullName>Tau 5</fullName>
    </alternativeName>
</protein>